<proteinExistence type="inferred from homology"/>
<organism>
    <name type="scientific">Salmonella dublin (strain CT_02021853)</name>
    <dbReference type="NCBI Taxonomy" id="439851"/>
    <lineage>
        <taxon>Bacteria</taxon>
        <taxon>Pseudomonadati</taxon>
        <taxon>Pseudomonadota</taxon>
        <taxon>Gammaproteobacteria</taxon>
        <taxon>Enterobacterales</taxon>
        <taxon>Enterobacteriaceae</taxon>
        <taxon>Salmonella</taxon>
    </lineage>
</organism>
<name>CYSH_SALDC</name>
<keyword id="KW-0963">Cytoplasm</keyword>
<keyword id="KW-0560">Oxidoreductase</keyword>
<feature type="chain" id="PRO_1000092180" description="Phosphoadenosine 5'-phosphosulfate reductase">
    <location>
        <begin position="1"/>
        <end position="244"/>
    </location>
</feature>
<feature type="active site" description="Nucleophile; cysteine thiosulfonate intermediate" evidence="1">
    <location>
        <position position="239"/>
    </location>
</feature>
<comment type="function">
    <text evidence="1">Catalyzes the formation of sulfite from phosphoadenosine 5'-phosphosulfate (PAPS) using thioredoxin as an electron donor.</text>
</comment>
<comment type="catalytic activity">
    <reaction evidence="1">
        <text>[thioredoxin]-disulfide + sulfite + adenosine 3',5'-bisphosphate + 2 H(+) = [thioredoxin]-dithiol + 3'-phosphoadenylyl sulfate</text>
        <dbReference type="Rhea" id="RHEA:11724"/>
        <dbReference type="Rhea" id="RHEA-COMP:10698"/>
        <dbReference type="Rhea" id="RHEA-COMP:10700"/>
        <dbReference type="ChEBI" id="CHEBI:15378"/>
        <dbReference type="ChEBI" id="CHEBI:17359"/>
        <dbReference type="ChEBI" id="CHEBI:29950"/>
        <dbReference type="ChEBI" id="CHEBI:50058"/>
        <dbReference type="ChEBI" id="CHEBI:58339"/>
        <dbReference type="ChEBI" id="CHEBI:58343"/>
        <dbReference type="EC" id="1.8.4.8"/>
    </reaction>
</comment>
<comment type="pathway">
    <text evidence="1">Sulfur metabolism; hydrogen sulfide biosynthesis; sulfite from sulfate: step 3/3.</text>
</comment>
<comment type="subcellular location">
    <subcellularLocation>
        <location evidence="1">Cytoplasm</location>
    </subcellularLocation>
</comment>
<comment type="similarity">
    <text evidence="1">Belongs to the PAPS reductase family. CysH subfamily.</text>
</comment>
<gene>
    <name evidence="1" type="primary">cysH</name>
    <name type="ordered locus">SeD_A3258</name>
</gene>
<evidence type="ECO:0000255" key="1">
    <source>
        <dbReference type="HAMAP-Rule" id="MF_00063"/>
    </source>
</evidence>
<protein>
    <recommendedName>
        <fullName evidence="1">Phosphoadenosine 5'-phosphosulfate reductase</fullName>
        <shortName evidence="1">PAPS reductase</shortName>
        <ecNumber evidence="1">1.8.4.8</ecNumber>
    </recommendedName>
    <alternativeName>
        <fullName evidence="1">3'-phosphoadenylylsulfate reductase</fullName>
    </alternativeName>
    <alternativeName>
        <fullName evidence="1">PAPS reductase, thioredoxin dependent</fullName>
    </alternativeName>
    <alternativeName>
        <fullName evidence="1">PAPS sulfotransferase</fullName>
    </alternativeName>
    <alternativeName>
        <fullName evidence="1">PAdoPS reductase</fullName>
    </alternativeName>
</protein>
<sequence>MSKLDLNALNELPKVDRVLALAETNAQLETLTAEERVAWALENLPGEYVLSSSFGIQAAVSLHLVNQIRPDIPVILTDTGYLFPETYQFIDELTDKLKLNLKVYRAGESPAWQEARYGKLWEQGVEGIEKYNEINKVEPMNRALKELKAQTWFAGLRREQSGSRAHLPVLAIQRGVFKVLPIIDWDNRTVYQYLQKHGLKYHPLWDQGYLSVGDTHTTRKWEPGMAEEETRFFGLKRECGLHEG</sequence>
<dbReference type="EC" id="1.8.4.8" evidence="1"/>
<dbReference type="EMBL" id="CP001144">
    <property type="protein sequence ID" value="ACH73607.1"/>
    <property type="molecule type" value="Genomic_DNA"/>
</dbReference>
<dbReference type="RefSeq" id="WP_000039870.1">
    <property type="nucleotide sequence ID" value="NC_011205.1"/>
</dbReference>
<dbReference type="SMR" id="B5FTU1"/>
<dbReference type="KEGG" id="sed:SeD_A3258"/>
<dbReference type="HOGENOM" id="CLU_044089_3_0_6"/>
<dbReference type="UniPathway" id="UPA00140">
    <property type="reaction ID" value="UER00206"/>
</dbReference>
<dbReference type="Proteomes" id="UP000008322">
    <property type="component" value="Chromosome"/>
</dbReference>
<dbReference type="GO" id="GO:0005737">
    <property type="term" value="C:cytoplasm"/>
    <property type="evidence" value="ECO:0007669"/>
    <property type="project" value="UniProtKB-SubCell"/>
</dbReference>
<dbReference type="GO" id="GO:0004604">
    <property type="term" value="F:phosphoadenylyl-sulfate reductase (thioredoxin) activity"/>
    <property type="evidence" value="ECO:0007669"/>
    <property type="project" value="UniProtKB-UniRule"/>
</dbReference>
<dbReference type="GO" id="GO:0070814">
    <property type="term" value="P:hydrogen sulfide biosynthetic process"/>
    <property type="evidence" value="ECO:0007669"/>
    <property type="project" value="UniProtKB-UniRule"/>
</dbReference>
<dbReference type="GO" id="GO:0019379">
    <property type="term" value="P:sulfate assimilation, phosphoadenylyl sulfate reduction by phosphoadenylyl-sulfate reductase (thioredoxin)"/>
    <property type="evidence" value="ECO:0007669"/>
    <property type="project" value="UniProtKB-UniRule"/>
</dbReference>
<dbReference type="CDD" id="cd23945">
    <property type="entry name" value="PAPS_reductase"/>
    <property type="match status" value="1"/>
</dbReference>
<dbReference type="FunFam" id="3.40.50.620:FF:000043">
    <property type="entry name" value="Phosphoadenosine phosphosulfate reductase"/>
    <property type="match status" value="1"/>
</dbReference>
<dbReference type="Gene3D" id="3.40.50.620">
    <property type="entry name" value="HUPs"/>
    <property type="match status" value="1"/>
</dbReference>
<dbReference type="HAMAP" id="MF_00063">
    <property type="entry name" value="CysH"/>
    <property type="match status" value="1"/>
</dbReference>
<dbReference type="InterPro" id="IPR004511">
    <property type="entry name" value="PAPS/APS_Rdtase"/>
</dbReference>
<dbReference type="InterPro" id="IPR002500">
    <property type="entry name" value="PAPS_reduct_dom"/>
</dbReference>
<dbReference type="InterPro" id="IPR011800">
    <property type="entry name" value="PAPS_reductase_CysH"/>
</dbReference>
<dbReference type="InterPro" id="IPR014729">
    <property type="entry name" value="Rossmann-like_a/b/a_fold"/>
</dbReference>
<dbReference type="NCBIfam" id="TIGR00434">
    <property type="entry name" value="cysH"/>
    <property type="match status" value="1"/>
</dbReference>
<dbReference type="NCBIfam" id="TIGR02057">
    <property type="entry name" value="PAPS_reductase"/>
    <property type="match status" value="1"/>
</dbReference>
<dbReference type="NCBIfam" id="NF002537">
    <property type="entry name" value="PRK02090.1"/>
    <property type="match status" value="1"/>
</dbReference>
<dbReference type="PANTHER" id="PTHR46509">
    <property type="entry name" value="PHOSPHOADENOSINE PHOSPHOSULFATE REDUCTASE"/>
    <property type="match status" value="1"/>
</dbReference>
<dbReference type="PANTHER" id="PTHR46509:SF1">
    <property type="entry name" value="PHOSPHOADENOSINE PHOSPHOSULFATE REDUCTASE"/>
    <property type="match status" value="1"/>
</dbReference>
<dbReference type="Pfam" id="PF01507">
    <property type="entry name" value="PAPS_reduct"/>
    <property type="match status" value="1"/>
</dbReference>
<dbReference type="PIRSF" id="PIRSF000857">
    <property type="entry name" value="PAPS_reductase"/>
    <property type="match status" value="1"/>
</dbReference>
<dbReference type="SUPFAM" id="SSF52402">
    <property type="entry name" value="Adenine nucleotide alpha hydrolases-like"/>
    <property type="match status" value="1"/>
</dbReference>
<reference key="1">
    <citation type="journal article" date="2011" name="J. Bacteriol.">
        <title>Comparative genomics of 28 Salmonella enterica isolates: evidence for CRISPR-mediated adaptive sublineage evolution.</title>
        <authorList>
            <person name="Fricke W.F."/>
            <person name="Mammel M.K."/>
            <person name="McDermott P.F."/>
            <person name="Tartera C."/>
            <person name="White D.G."/>
            <person name="Leclerc J.E."/>
            <person name="Ravel J."/>
            <person name="Cebula T.A."/>
        </authorList>
    </citation>
    <scope>NUCLEOTIDE SEQUENCE [LARGE SCALE GENOMIC DNA]</scope>
    <source>
        <strain>CT_02021853</strain>
    </source>
</reference>
<accession>B5FTU1</accession>